<name>AMPA_SYNC1</name>
<evidence type="ECO:0000255" key="1">
    <source>
        <dbReference type="HAMAP-Rule" id="MF_00181"/>
    </source>
</evidence>
<gene>
    <name evidence="1" type="primary">pepA</name>
    <name type="ordered locus">Pcar_0200</name>
</gene>
<organism>
    <name type="scientific">Syntrophotalea carbinolica (strain DSM 2380 / NBRC 103641 / GraBd1)</name>
    <name type="common">Pelobacter carbinolicus</name>
    <dbReference type="NCBI Taxonomy" id="338963"/>
    <lineage>
        <taxon>Bacteria</taxon>
        <taxon>Pseudomonadati</taxon>
        <taxon>Thermodesulfobacteriota</taxon>
        <taxon>Desulfuromonadia</taxon>
        <taxon>Desulfuromonadales</taxon>
        <taxon>Syntrophotaleaceae</taxon>
        <taxon>Syntrophotalea</taxon>
    </lineage>
</organism>
<reference key="1">
    <citation type="submission" date="2005-10" db="EMBL/GenBank/DDBJ databases">
        <title>Complete sequence of Pelobacter carbinolicus DSM 2380.</title>
        <authorList>
            <person name="Copeland A."/>
            <person name="Lucas S."/>
            <person name="Lapidus A."/>
            <person name="Barry K."/>
            <person name="Detter J.C."/>
            <person name="Glavina T."/>
            <person name="Hammon N."/>
            <person name="Israni S."/>
            <person name="Pitluck S."/>
            <person name="Chertkov O."/>
            <person name="Schmutz J."/>
            <person name="Larimer F."/>
            <person name="Land M."/>
            <person name="Kyrpides N."/>
            <person name="Ivanova N."/>
            <person name="Richardson P."/>
        </authorList>
    </citation>
    <scope>NUCLEOTIDE SEQUENCE [LARGE SCALE GENOMIC DNA]</scope>
    <source>
        <strain>DSM 2380 / NBRC 103641 / GraBd1</strain>
    </source>
</reference>
<keyword id="KW-0031">Aminopeptidase</keyword>
<keyword id="KW-0963">Cytoplasm</keyword>
<keyword id="KW-0378">Hydrolase</keyword>
<keyword id="KW-0464">Manganese</keyword>
<keyword id="KW-0479">Metal-binding</keyword>
<keyword id="KW-0645">Protease</keyword>
<keyword id="KW-1185">Reference proteome</keyword>
<protein>
    <recommendedName>
        <fullName evidence="1">Probable cytosol aminopeptidase</fullName>
        <ecNumber evidence="1">3.4.11.1</ecNumber>
    </recommendedName>
    <alternativeName>
        <fullName evidence="1">Leucine aminopeptidase</fullName>
        <shortName evidence="1">LAP</shortName>
        <ecNumber evidence="1">3.4.11.10</ecNumber>
    </alternativeName>
    <alternativeName>
        <fullName evidence="1">Leucyl aminopeptidase</fullName>
    </alternativeName>
</protein>
<dbReference type="EC" id="3.4.11.1" evidence="1"/>
<dbReference type="EC" id="3.4.11.10" evidence="1"/>
<dbReference type="EMBL" id="CP000142">
    <property type="protein sequence ID" value="ABA87461.1"/>
    <property type="molecule type" value="Genomic_DNA"/>
</dbReference>
<dbReference type="RefSeq" id="WP_011339861.1">
    <property type="nucleotide sequence ID" value="NC_007498.2"/>
</dbReference>
<dbReference type="SMR" id="Q3A831"/>
<dbReference type="STRING" id="338963.Pcar_0200"/>
<dbReference type="MEROPS" id="M17.003"/>
<dbReference type="KEGG" id="pca:Pcar_0200"/>
<dbReference type="eggNOG" id="COG0260">
    <property type="taxonomic scope" value="Bacteria"/>
</dbReference>
<dbReference type="HOGENOM" id="CLU_013734_2_2_7"/>
<dbReference type="OrthoDB" id="9809354at2"/>
<dbReference type="Proteomes" id="UP000002534">
    <property type="component" value="Chromosome"/>
</dbReference>
<dbReference type="GO" id="GO:0005737">
    <property type="term" value="C:cytoplasm"/>
    <property type="evidence" value="ECO:0007669"/>
    <property type="project" value="UniProtKB-SubCell"/>
</dbReference>
<dbReference type="GO" id="GO:0030145">
    <property type="term" value="F:manganese ion binding"/>
    <property type="evidence" value="ECO:0007669"/>
    <property type="project" value="UniProtKB-UniRule"/>
</dbReference>
<dbReference type="GO" id="GO:0070006">
    <property type="term" value="F:metalloaminopeptidase activity"/>
    <property type="evidence" value="ECO:0007669"/>
    <property type="project" value="InterPro"/>
</dbReference>
<dbReference type="GO" id="GO:0006508">
    <property type="term" value="P:proteolysis"/>
    <property type="evidence" value="ECO:0007669"/>
    <property type="project" value="UniProtKB-KW"/>
</dbReference>
<dbReference type="CDD" id="cd00433">
    <property type="entry name" value="Peptidase_M17"/>
    <property type="match status" value="1"/>
</dbReference>
<dbReference type="Gene3D" id="3.40.220.10">
    <property type="entry name" value="Leucine Aminopeptidase, subunit E, domain 1"/>
    <property type="match status" value="1"/>
</dbReference>
<dbReference type="Gene3D" id="3.40.630.10">
    <property type="entry name" value="Zn peptidases"/>
    <property type="match status" value="1"/>
</dbReference>
<dbReference type="HAMAP" id="MF_00181">
    <property type="entry name" value="Cytosol_peptidase_M17"/>
    <property type="match status" value="1"/>
</dbReference>
<dbReference type="InterPro" id="IPR011356">
    <property type="entry name" value="Leucine_aapep/pepB"/>
</dbReference>
<dbReference type="InterPro" id="IPR043472">
    <property type="entry name" value="Macro_dom-like"/>
</dbReference>
<dbReference type="InterPro" id="IPR000819">
    <property type="entry name" value="Peptidase_M17_C"/>
</dbReference>
<dbReference type="InterPro" id="IPR023042">
    <property type="entry name" value="Peptidase_M17_leu_NH2_pept"/>
</dbReference>
<dbReference type="InterPro" id="IPR008283">
    <property type="entry name" value="Peptidase_M17_N"/>
</dbReference>
<dbReference type="NCBIfam" id="NF002073">
    <property type="entry name" value="PRK00913.1-2"/>
    <property type="match status" value="1"/>
</dbReference>
<dbReference type="NCBIfam" id="NF002074">
    <property type="entry name" value="PRK00913.1-4"/>
    <property type="match status" value="1"/>
</dbReference>
<dbReference type="NCBIfam" id="NF002075">
    <property type="entry name" value="PRK00913.2-2"/>
    <property type="match status" value="1"/>
</dbReference>
<dbReference type="NCBIfam" id="NF002077">
    <property type="entry name" value="PRK00913.2-4"/>
    <property type="match status" value="1"/>
</dbReference>
<dbReference type="NCBIfam" id="NF002083">
    <property type="entry name" value="PRK00913.3-5"/>
    <property type="match status" value="1"/>
</dbReference>
<dbReference type="PANTHER" id="PTHR11963:SF23">
    <property type="entry name" value="CYTOSOL AMINOPEPTIDASE"/>
    <property type="match status" value="1"/>
</dbReference>
<dbReference type="PANTHER" id="PTHR11963">
    <property type="entry name" value="LEUCINE AMINOPEPTIDASE-RELATED"/>
    <property type="match status" value="1"/>
</dbReference>
<dbReference type="Pfam" id="PF00883">
    <property type="entry name" value="Peptidase_M17"/>
    <property type="match status" value="1"/>
</dbReference>
<dbReference type="Pfam" id="PF02789">
    <property type="entry name" value="Peptidase_M17_N"/>
    <property type="match status" value="1"/>
</dbReference>
<dbReference type="PRINTS" id="PR00481">
    <property type="entry name" value="LAMNOPPTDASE"/>
</dbReference>
<dbReference type="SUPFAM" id="SSF52949">
    <property type="entry name" value="Macro domain-like"/>
    <property type="match status" value="1"/>
</dbReference>
<dbReference type="SUPFAM" id="SSF53187">
    <property type="entry name" value="Zn-dependent exopeptidases"/>
    <property type="match status" value="1"/>
</dbReference>
<dbReference type="PROSITE" id="PS00631">
    <property type="entry name" value="CYTOSOL_AP"/>
    <property type="match status" value="1"/>
</dbReference>
<comment type="function">
    <text evidence="1">Presumably involved in the processing and regular turnover of intracellular proteins. Catalyzes the removal of unsubstituted N-terminal amino acids from various peptides.</text>
</comment>
<comment type="catalytic activity">
    <reaction evidence="1">
        <text>Release of an N-terminal amino acid, Xaa-|-Yaa-, in which Xaa is preferably Leu, but may be other amino acids including Pro although not Arg or Lys, and Yaa may be Pro. Amino acid amides and methyl esters are also readily hydrolyzed, but rates on arylamides are exceedingly low.</text>
        <dbReference type="EC" id="3.4.11.1"/>
    </reaction>
</comment>
<comment type="catalytic activity">
    <reaction evidence="1">
        <text>Release of an N-terminal amino acid, preferentially leucine, but not glutamic or aspartic acids.</text>
        <dbReference type="EC" id="3.4.11.10"/>
    </reaction>
</comment>
<comment type="cofactor">
    <cofactor evidence="1">
        <name>Mn(2+)</name>
        <dbReference type="ChEBI" id="CHEBI:29035"/>
    </cofactor>
    <text evidence="1">Binds 2 manganese ions per subunit.</text>
</comment>
<comment type="subcellular location">
    <subcellularLocation>
        <location evidence="1">Cytoplasm</location>
    </subcellularLocation>
</comment>
<comment type="similarity">
    <text evidence="1">Belongs to the peptidase M17 family.</text>
</comment>
<feature type="chain" id="PRO_1000019948" description="Probable cytosol aminopeptidase">
    <location>
        <begin position="1"/>
        <end position="497"/>
    </location>
</feature>
<feature type="active site" evidence="1">
    <location>
        <position position="279"/>
    </location>
</feature>
<feature type="active site" evidence="1">
    <location>
        <position position="353"/>
    </location>
</feature>
<feature type="binding site" evidence="1">
    <location>
        <position position="267"/>
    </location>
    <ligand>
        <name>Mn(2+)</name>
        <dbReference type="ChEBI" id="CHEBI:29035"/>
        <label>2</label>
    </ligand>
</feature>
<feature type="binding site" evidence="1">
    <location>
        <position position="272"/>
    </location>
    <ligand>
        <name>Mn(2+)</name>
        <dbReference type="ChEBI" id="CHEBI:29035"/>
        <label>1</label>
    </ligand>
</feature>
<feature type="binding site" evidence="1">
    <location>
        <position position="272"/>
    </location>
    <ligand>
        <name>Mn(2+)</name>
        <dbReference type="ChEBI" id="CHEBI:29035"/>
        <label>2</label>
    </ligand>
</feature>
<feature type="binding site" evidence="1">
    <location>
        <position position="290"/>
    </location>
    <ligand>
        <name>Mn(2+)</name>
        <dbReference type="ChEBI" id="CHEBI:29035"/>
        <label>2</label>
    </ligand>
</feature>
<feature type="binding site" evidence="1">
    <location>
        <position position="349"/>
    </location>
    <ligand>
        <name>Mn(2+)</name>
        <dbReference type="ChEBI" id="CHEBI:29035"/>
        <label>1</label>
    </ligand>
</feature>
<feature type="binding site" evidence="1">
    <location>
        <position position="351"/>
    </location>
    <ligand>
        <name>Mn(2+)</name>
        <dbReference type="ChEBI" id="CHEBI:29035"/>
        <label>1</label>
    </ligand>
</feature>
<feature type="binding site" evidence="1">
    <location>
        <position position="351"/>
    </location>
    <ligand>
        <name>Mn(2+)</name>
        <dbReference type="ChEBI" id="CHEBI:29035"/>
        <label>2</label>
    </ligand>
</feature>
<sequence>MQIVVGCMPALTLKTDCLMLGVWQDRTDTPLLKELDTALHGALGQSVDSKAFVGKEGETLLFQTGAGLPAARVLLIGLGAYAQADCGAMRRGAAEGARVLQQQRVKRAGLALSEAPAGLPLTQAVQVLVEGLLLASYRFDRFLTQKREDLPPLLETLDILIADQGSLEGVAAAVERARHIGHGVALARDLVNQPGNVKSPEFLAERARQLAGECGLSCTVLEQEQLEREGFGALLAVAQGSARPPRLIVLEYRGGAPDEKPLALVGKGVVFDSGGISLKPGEKMDEMKMDMAGAAAVFGAMSAAAGLRLPVNLVAIVPAVENLPSASAYRPGDIITSLSGRTIEVLNTDAEGRLILADALTYAGRFEPRAVIDLATLTGACIIALGHEASAVFSNRDELARNLIRAGETSRERLWQLPLWDSYDKQIKSEIADMKNTGGRPAGTITAAAFLQRFVPDCPWAHIDIAGTAWEAKGTALCPRGGTGVGVRLLIDLLEQE</sequence>
<proteinExistence type="inferred from homology"/>
<accession>Q3A831</accession>